<comment type="function">
    <text evidence="1">Could be a nuclease involved in processing of the 5'-end of pre-16S rRNA.</text>
</comment>
<comment type="subcellular location">
    <subcellularLocation>
        <location evidence="1">Cytoplasm</location>
    </subcellularLocation>
</comment>
<comment type="similarity">
    <text evidence="1">Belongs to the YqgF nuclease family.</text>
</comment>
<reference key="1">
    <citation type="submission" date="2007-03" db="EMBL/GenBank/DDBJ databases">
        <title>Complete sequence of chromosome 1 of Burkholderia vietnamiensis G4.</title>
        <authorList>
            <consortium name="US DOE Joint Genome Institute"/>
            <person name="Copeland A."/>
            <person name="Lucas S."/>
            <person name="Lapidus A."/>
            <person name="Barry K."/>
            <person name="Detter J.C."/>
            <person name="Glavina del Rio T."/>
            <person name="Hammon N."/>
            <person name="Israni S."/>
            <person name="Dalin E."/>
            <person name="Tice H."/>
            <person name="Pitluck S."/>
            <person name="Chain P."/>
            <person name="Malfatti S."/>
            <person name="Shin M."/>
            <person name="Vergez L."/>
            <person name="Schmutz J."/>
            <person name="Larimer F."/>
            <person name="Land M."/>
            <person name="Hauser L."/>
            <person name="Kyrpides N."/>
            <person name="Tiedje J."/>
            <person name="Richardson P."/>
        </authorList>
    </citation>
    <scope>NUCLEOTIDE SEQUENCE [LARGE SCALE GENOMIC DNA]</scope>
    <source>
        <strain>G4 / LMG 22486</strain>
    </source>
</reference>
<sequence length="149" mass="16694">MSGASARDATFLAFDYGEKRIGVALGNALTRSARALVVIPNLNREHRFKAVGELLAEWRPDALVVGLPMHPDGTPHDMTQQAKRFGNQLNGRFGLPVTWVDERYSSVEAEAGLRERNVRGRARTDMLDAEAARVILQQYFDELSDHEHH</sequence>
<gene>
    <name type="ordered locus">Bcep1808_0799</name>
</gene>
<feature type="chain" id="PRO_1000061498" description="Putative pre-16S rRNA nuclease">
    <location>
        <begin position="1"/>
        <end position="149"/>
    </location>
</feature>
<proteinExistence type="inferred from homology"/>
<protein>
    <recommendedName>
        <fullName evidence="1">Putative pre-16S rRNA nuclease</fullName>
        <ecNumber evidence="1">3.1.-.-</ecNumber>
    </recommendedName>
</protein>
<name>YQGF_BURVG</name>
<dbReference type="EC" id="3.1.-.-" evidence="1"/>
<dbReference type="EMBL" id="CP000614">
    <property type="protein sequence ID" value="ABO53811.1"/>
    <property type="molecule type" value="Genomic_DNA"/>
</dbReference>
<dbReference type="SMR" id="A4JC08"/>
<dbReference type="KEGG" id="bvi:Bcep1808_0799"/>
<dbReference type="eggNOG" id="COG0816">
    <property type="taxonomic scope" value="Bacteria"/>
</dbReference>
<dbReference type="HOGENOM" id="CLU_098240_3_0_4"/>
<dbReference type="Proteomes" id="UP000002287">
    <property type="component" value="Chromosome 1"/>
</dbReference>
<dbReference type="GO" id="GO:0005829">
    <property type="term" value="C:cytosol"/>
    <property type="evidence" value="ECO:0007669"/>
    <property type="project" value="TreeGrafter"/>
</dbReference>
<dbReference type="GO" id="GO:0004518">
    <property type="term" value="F:nuclease activity"/>
    <property type="evidence" value="ECO:0007669"/>
    <property type="project" value="UniProtKB-KW"/>
</dbReference>
<dbReference type="GO" id="GO:0000967">
    <property type="term" value="P:rRNA 5'-end processing"/>
    <property type="evidence" value="ECO:0007669"/>
    <property type="project" value="UniProtKB-UniRule"/>
</dbReference>
<dbReference type="CDD" id="cd16964">
    <property type="entry name" value="YqgF"/>
    <property type="match status" value="1"/>
</dbReference>
<dbReference type="Gene3D" id="3.30.420.140">
    <property type="entry name" value="YqgF/RNase H-like domain"/>
    <property type="match status" value="1"/>
</dbReference>
<dbReference type="HAMAP" id="MF_00651">
    <property type="entry name" value="Nuclease_YqgF"/>
    <property type="match status" value="1"/>
</dbReference>
<dbReference type="InterPro" id="IPR012337">
    <property type="entry name" value="RNaseH-like_sf"/>
</dbReference>
<dbReference type="InterPro" id="IPR005227">
    <property type="entry name" value="YqgF"/>
</dbReference>
<dbReference type="InterPro" id="IPR006641">
    <property type="entry name" value="YqgF/RNaseH-like_dom"/>
</dbReference>
<dbReference type="InterPro" id="IPR037027">
    <property type="entry name" value="YqgF/RNaseH-like_dom_sf"/>
</dbReference>
<dbReference type="NCBIfam" id="TIGR00250">
    <property type="entry name" value="RNAse_H_YqgF"/>
    <property type="match status" value="1"/>
</dbReference>
<dbReference type="PANTHER" id="PTHR33317">
    <property type="entry name" value="POLYNUCLEOTIDYL TRANSFERASE, RIBONUCLEASE H-LIKE SUPERFAMILY PROTEIN"/>
    <property type="match status" value="1"/>
</dbReference>
<dbReference type="PANTHER" id="PTHR33317:SF4">
    <property type="entry name" value="POLYNUCLEOTIDYL TRANSFERASE, RIBONUCLEASE H-LIKE SUPERFAMILY PROTEIN"/>
    <property type="match status" value="1"/>
</dbReference>
<dbReference type="Pfam" id="PF03652">
    <property type="entry name" value="RuvX"/>
    <property type="match status" value="1"/>
</dbReference>
<dbReference type="SMART" id="SM00732">
    <property type="entry name" value="YqgFc"/>
    <property type="match status" value="1"/>
</dbReference>
<dbReference type="SUPFAM" id="SSF53098">
    <property type="entry name" value="Ribonuclease H-like"/>
    <property type="match status" value="1"/>
</dbReference>
<keyword id="KW-0963">Cytoplasm</keyword>
<keyword id="KW-0378">Hydrolase</keyword>
<keyword id="KW-0540">Nuclease</keyword>
<keyword id="KW-0690">Ribosome biogenesis</keyword>
<evidence type="ECO:0000255" key="1">
    <source>
        <dbReference type="HAMAP-Rule" id="MF_00651"/>
    </source>
</evidence>
<organism>
    <name type="scientific">Burkholderia vietnamiensis (strain G4 / LMG 22486)</name>
    <name type="common">Burkholderia cepacia (strain R1808)</name>
    <dbReference type="NCBI Taxonomy" id="269482"/>
    <lineage>
        <taxon>Bacteria</taxon>
        <taxon>Pseudomonadati</taxon>
        <taxon>Pseudomonadota</taxon>
        <taxon>Betaproteobacteria</taxon>
        <taxon>Burkholderiales</taxon>
        <taxon>Burkholderiaceae</taxon>
        <taxon>Burkholderia</taxon>
        <taxon>Burkholderia cepacia complex</taxon>
    </lineage>
</organism>
<accession>A4JC08</accession>